<name>CBIA_THEAC</name>
<organism>
    <name type="scientific">Thermoplasma acidophilum (strain ATCC 25905 / DSM 1728 / JCM 9062 / NBRC 15155 / AMRC-C165)</name>
    <dbReference type="NCBI Taxonomy" id="273075"/>
    <lineage>
        <taxon>Archaea</taxon>
        <taxon>Methanobacteriati</taxon>
        <taxon>Thermoplasmatota</taxon>
        <taxon>Thermoplasmata</taxon>
        <taxon>Thermoplasmatales</taxon>
        <taxon>Thermoplasmataceae</taxon>
        <taxon>Thermoplasma</taxon>
    </lineage>
</organism>
<accession>Q9HIX6</accession>
<protein>
    <recommendedName>
        <fullName evidence="1">Cobyrinate a,c-diamide synthase</fullName>
        <ecNumber evidence="1">6.3.5.11</ecNumber>
    </recommendedName>
    <alternativeName>
        <fullName evidence="1">Cobyrinic acid a,c-diamide synthetase</fullName>
    </alternativeName>
</protein>
<reference key="1">
    <citation type="journal article" date="2000" name="Nature">
        <title>The genome sequence of the thermoacidophilic scavenger Thermoplasma acidophilum.</title>
        <authorList>
            <person name="Ruepp A."/>
            <person name="Graml W."/>
            <person name="Santos-Martinez M.-L."/>
            <person name="Koretke K.K."/>
            <person name="Volker C."/>
            <person name="Mewes H.-W."/>
            <person name="Frishman D."/>
            <person name="Stocker S."/>
            <person name="Lupas A.N."/>
            <person name="Baumeister W."/>
        </authorList>
    </citation>
    <scope>NUCLEOTIDE SEQUENCE [LARGE SCALE GENOMIC DNA]</scope>
    <source>
        <strain>ATCC 25905 / DSM 1728 / JCM 9062 / NBRC 15155 / AMRC-C165</strain>
    </source>
</reference>
<sequence>MKVPRLIVAGTESGAGKTTITISIILKLLANQMKVKPYKIGPDYIDPQFHRLASGVPSENLDLWMMNDDQIRYLLIEGSREFDISVIEGVMGLFDGAGSDFTGSTYDLARRTGTPIVLVIDGYGISATAAAIVSGIKAYAGELLRGVIVTRVSGESHYRLIRDAVEEKTGVPVLGYMIRNEKAVLESRHLGLVQAYEIDEIREIFGAIDSSTVIDMHQIIDIARSADKLETLYSPEIERLGTFKVSVAMDSAFDFYYEENLRMLKRMGASIRYFSPMGNEVPDADSDLIYLGGGYPEVFAGKLQSATDTIEAIRHAASIGTGVYAECGGYMFLCRSLESTDGHIYGGVGIIPASVYMDASLVIGYREISAKRDTSILRAGETARGHEFHKSRIRFDGPYDHPFVLKSRSSSFEDGFSSGSVTATYAHIHFLSNPRVAENLLIA</sequence>
<gene>
    <name evidence="1" type="primary">cbiA</name>
    <name type="ordered locus">Ta1200</name>
</gene>
<comment type="function">
    <text evidence="1">Catalyzes the ATP-dependent amidation of the two carboxylate groups at positions a and c of cobyrinate, using either L-glutamine or ammonia as the nitrogen source.</text>
</comment>
<comment type="catalytic activity">
    <reaction evidence="1">
        <text>cob(II)yrinate + 2 L-glutamine + 2 ATP + 2 H2O = cob(II)yrinate a,c diamide + 2 L-glutamate + 2 ADP + 2 phosphate + 2 H(+)</text>
        <dbReference type="Rhea" id="RHEA:26289"/>
        <dbReference type="ChEBI" id="CHEBI:15377"/>
        <dbReference type="ChEBI" id="CHEBI:15378"/>
        <dbReference type="ChEBI" id="CHEBI:29985"/>
        <dbReference type="ChEBI" id="CHEBI:30616"/>
        <dbReference type="ChEBI" id="CHEBI:43474"/>
        <dbReference type="ChEBI" id="CHEBI:58359"/>
        <dbReference type="ChEBI" id="CHEBI:58537"/>
        <dbReference type="ChEBI" id="CHEBI:58894"/>
        <dbReference type="ChEBI" id="CHEBI:456216"/>
        <dbReference type="EC" id="6.3.5.11"/>
    </reaction>
</comment>
<comment type="cofactor">
    <cofactor evidence="1">
        <name>Mg(2+)</name>
        <dbReference type="ChEBI" id="CHEBI:18420"/>
    </cofactor>
</comment>
<comment type="pathway">
    <text evidence="1">Cofactor biosynthesis; adenosylcobalamin biosynthesis; cob(II)yrinate a,c-diamide from sirohydrochlorin (anaerobic route): step 10/10.</text>
</comment>
<comment type="domain">
    <text evidence="1">Comprises of two domains. The C-terminal domain contains the binding site for glutamine and catalyzes the hydrolysis of this substrate to glutamate and ammonia. The N-terminal domain is anticipated to bind ATP and cobyrinate and catalyzes the ultimate synthesis of the diamide product. The ammonia produced via the glutaminase domain is probably translocated to the adjacent domain via a molecular tunnel, where it reacts with an activated intermediate.</text>
</comment>
<comment type="miscellaneous">
    <text evidence="1">The a and c carboxylates of cobyrinate are activated for nucleophilic attack via formation of a phosphorylated intermediate by ATP. CbiA catalyzes first the amidation of the c-carboxylate, and then that of the a-carboxylate.</text>
</comment>
<comment type="similarity">
    <text evidence="1">Belongs to the CobB/CbiA family.</text>
</comment>
<dbReference type="EC" id="6.3.5.11" evidence="1"/>
<dbReference type="EMBL" id="AL445066">
    <property type="protein sequence ID" value="CAC12325.1"/>
    <property type="molecule type" value="Genomic_DNA"/>
</dbReference>
<dbReference type="RefSeq" id="WP_010901607.1">
    <property type="nucleotide sequence ID" value="NC_002578.1"/>
</dbReference>
<dbReference type="SMR" id="Q9HIX6"/>
<dbReference type="FunCoup" id="Q9HIX6">
    <property type="interactions" value="56"/>
</dbReference>
<dbReference type="STRING" id="273075.gene:9572423"/>
<dbReference type="PaxDb" id="273075-Ta1200"/>
<dbReference type="EnsemblBacteria" id="CAC12325">
    <property type="protein sequence ID" value="CAC12325"/>
    <property type="gene ID" value="CAC12325"/>
</dbReference>
<dbReference type="KEGG" id="tac:Ta1200"/>
<dbReference type="eggNOG" id="arCOG00106">
    <property type="taxonomic scope" value="Archaea"/>
</dbReference>
<dbReference type="HOGENOM" id="CLU_022752_2_0_2"/>
<dbReference type="InParanoid" id="Q9HIX6"/>
<dbReference type="OrthoDB" id="8896at2157"/>
<dbReference type="UniPathway" id="UPA00148">
    <property type="reaction ID" value="UER00231"/>
</dbReference>
<dbReference type="Proteomes" id="UP000001024">
    <property type="component" value="Chromosome"/>
</dbReference>
<dbReference type="GO" id="GO:0005524">
    <property type="term" value="F:ATP binding"/>
    <property type="evidence" value="ECO:0007669"/>
    <property type="project" value="UniProtKB-UniRule"/>
</dbReference>
<dbReference type="GO" id="GO:0042242">
    <property type="term" value="F:cobyrinic acid a,c-diamide synthase activity"/>
    <property type="evidence" value="ECO:0007669"/>
    <property type="project" value="UniProtKB-UniRule"/>
</dbReference>
<dbReference type="GO" id="GO:0009236">
    <property type="term" value="P:cobalamin biosynthetic process"/>
    <property type="evidence" value="ECO:0007669"/>
    <property type="project" value="UniProtKB-UniRule"/>
</dbReference>
<dbReference type="CDD" id="cd05388">
    <property type="entry name" value="CobB_N"/>
    <property type="match status" value="1"/>
</dbReference>
<dbReference type="CDD" id="cd03130">
    <property type="entry name" value="GATase1_CobB"/>
    <property type="match status" value="1"/>
</dbReference>
<dbReference type="Gene3D" id="3.40.50.880">
    <property type="match status" value="1"/>
</dbReference>
<dbReference type="Gene3D" id="3.40.50.300">
    <property type="entry name" value="P-loop containing nucleotide triphosphate hydrolases"/>
    <property type="match status" value="1"/>
</dbReference>
<dbReference type="HAMAP" id="MF_00027">
    <property type="entry name" value="CobB_CbiA"/>
    <property type="match status" value="1"/>
</dbReference>
<dbReference type="InterPro" id="IPR004484">
    <property type="entry name" value="CbiA/CobB_synth"/>
</dbReference>
<dbReference type="InterPro" id="IPR029062">
    <property type="entry name" value="Class_I_gatase-like"/>
</dbReference>
<dbReference type="InterPro" id="IPR002586">
    <property type="entry name" value="CobQ/CobB/MinD/ParA_Nub-bd_dom"/>
</dbReference>
<dbReference type="InterPro" id="IPR011698">
    <property type="entry name" value="GATase_3"/>
</dbReference>
<dbReference type="InterPro" id="IPR027417">
    <property type="entry name" value="P-loop_NTPase"/>
</dbReference>
<dbReference type="NCBIfam" id="TIGR00379">
    <property type="entry name" value="cobB"/>
    <property type="match status" value="1"/>
</dbReference>
<dbReference type="NCBIfam" id="NF002204">
    <property type="entry name" value="PRK01077.1"/>
    <property type="match status" value="1"/>
</dbReference>
<dbReference type="PANTHER" id="PTHR43873">
    <property type="entry name" value="COBYRINATE A,C-DIAMIDE SYNTHASE"/>
    <property type="match status" value="1"/>
</dbReference>
<dbReference type="PANTHER" id="PTHR43873:SF1">
    <property type="entry name" value="COBYRINATE A,C-DIAMIDE SYNTHASE"/>
    <property type="match status" value="1"/>
</dbReference>
<dbReference type="Pfam" id="PF01656">
    <property type="entry name" value="CbiA"/>
    <property type="match status" value="1"/>
</dbReference>
<dbReference type="Pfam" id="PF07685">
    <property type="entry name" value="GATase_3"/>
    <property type="match status" value="1"/>
</dbReference>
<dbReference type="SUPFAM" id="SSF52317">
    <property type="entry name" value="Class I glutamine amidotransferase-like"/>
    <property type="match status" value="1"/>
</dbReference>
<dbReference type="SUPFAM" id="SSF52540">
    <property type="entry name" value="P-loop containing nucleoside triphosphate hydrolases"/>
    <property type="match status" value="1"/>
</dbReference>
<dbReference type="PROSITE" id="PS51274">
    <property type="entry name" value="GATASE_COBBQ"/>
    <property type="match status" value="1"/>
</dbReference>
<proteinExistence type="inferred from homology"/>
<keyword id="KW-0067">ATP-binding</keyword>
<keyword id="KW-0169">Cobalamin biosynthesis</keyword>
<keyword id="KW-0315">Glutamine amidotransferase</keyword>
<keyword id="KW-0436">Ligase</keyword>
<keyword id="KW-0460">Magnesium</keyword>
<keyword id="KW-0547">Nucleotide-binding</keyword>
<keyword id="KW-1185">Reference proteome</keyword>
<evidence type="ECO:0000255" key="1">
    <source>
        <dbReference type="HAMAP-Rule" id="MF_00027"/>
    </source>
</evidence>
<feature type="chain" id="PRO_0000141282" description="Cobyrinate a,c-diamide synthase">
    <location>
        <begin position="1"/>
        <end position="443"/>
    </location>
</feature>
<feature type="domain" description="GATase cobBQ-type" evidence="1">
    <location>
        <begin position="244"/>
        <end position="435"/>
    </location>
</feature>
<feature type="active site" description="Nucleophile" evidence="1">
    <location>
        <position position="327"/>
    </location>
</feature>
<feature type="site" description="Increases nucleophilicity of active site Cys" evidence="1">
    <location>
        <position position="427"/>
    </location>
</feature>